<comment type="subunit">
    <text evidence="1">Homodimer.</text>
</comment>
<comment type="subcellular location">
    <subcellularLocation>
        <location evidence="1">Cytoplasm</location>
    </subcellularLocation>
</comment>
<comment type="similarity">
    <text evidence="1">Belongs to the 4-oxalocrotonate tautomerase family. PptA subfamily.</text>
</comment>
<name>PPTA_SHISS</name>
<accession>Q3Z1K4</accession>
<reference key="1">
    <citation type="journal article" date="2005" name="Nucleic Acids Res.">
        <title>Genome dynamics and diversity of Shigella species, the etiologic agents of bacillary dysentery.</title>
        <authorList>
            <person name="Yang F."/>
            <person name="Yang J."/>
            <person name="Zhang X."/>
            <person name="Chen L."/>
            <person name="Jiang Y."/>
            <person name="Yan Y."/>
            <person name="Tang X."/>
            <person name="Wang J."/>
            <person name="Xiong Z."/>
            <person name="Dong J."/>
            <person name="Xue Y."/>
            <person name="Zhu Y."/>
            <person name="Xu X."/>
            <person name="Sun L."/>
            <person name="Chen S."/>
            <person name="Nie H."/>
            <person name="Peng J."/>
            <person name="Xu J."/>
            <person name="Wang Y."/>
            <person name="Yuan Z."/>
            <person name="Wen Y."/>
            <person name="Yao Z."/>
            <person name="Shen Y."/>
            <person name="Qiang B."/>
            <person name="Hou Y."/>
            <person name="Yu J."/>
            <person name="Jin Q."/>
        </authorList>
    </citation>
    <scope>NUCLEOTIDE SEQUENCE [LARGE SCALE GENOMIC DNA]</scope>
    <source>
        <strain>Ss046</strain>
    </source>
</reference>
<proteinExistence type="inferred from homology"/>
<organism>
    <name type="scientific">Shigella sonnei (strain Ss046)</name>
    <dbReference type="NCBI Taxonomy" id="300269"/>
    <lineage>
        <taxon>Bacteria</taxon>
        <taxon>Pseudomonadati</taxon>
        <taxon>Pseudomonadota</taxon>
        <taxon>Gammaproteobacteria</taxon>
        <taxon>Enterobacterales</taxon>
        <taxon>Enterobacteriaceae</taxon>
        <taxon>Shigella</taxon>
    </lineage>
</organism>
<feature type="initiator methionine" description="Removed" evidence="1">
    <location>
        <position position="1"/>
    </location>
</feature>
<feature type="chain" id="PRO_0000348346" description="Tautomerase PptA">
    <location>
        <begin position="2"/>
        <end position="75"/>
    </location>
</feature>
<feature type="active site" description="Proton acceptor; via imino nitrogen" evidence="1">
    <location>
        <position position="2"/>
    </location>
</feature>
<evidence type="ECO:0000255" key="1">
    <source>
        <dbReference type="HAMAP-Rule" id="MF_00718"/>
    </source>
</evidence>
<dbReference type="EC" id="5.3.2.-" evidence="1"/>
<dbReference type="EMBL" id="CP000038">
    <property type="protein sequence ID" value="AAZ88358.1"/>
    <property type="molecule type" value="Genomic_DNA"/>
</dbReference>
<dbReference type="RefSeq" id="WP_001120145.1">
    <property type="nucleotide sequence ID" value="NC_007384.1"/>
</dbReference>
<dbReference type="SMR" id="Q3Z1K4"/>
<dbReference type="GeneID" id="93775620"/>
<dbReference type="KEGG" id="ssn:SSON_1664"/>
<dbReference type="HOGENOM" id="CLU_183611_0_1_6"/>
<dbReference type="Proteomes" id="UP000002529">
    <property type="component" value="Chromosome"/>
</dbReference>
<dbReference type="GO" id="GO:0005737">
    <property type="term" value="C:cytoplasm"/>
    <property type="evidence" value="ECO:0007669"/>
    <property type="project" value="UniProtKB-SubCell"/>
</dbReference>
<dbReference type="GO" id="GO:0016862">
    <property type="term" value="F:intramolecular oxidoreductase activity, interconverting keto- and enol-groups"/>
    <property type="evidence" value="ECO:0007669"/>
    <property type="project" value="UniProtKB-UniRule"/>
</dbReference>
<dbReference type="Gene3D" id="3.30.429.10">
    <property type="entry name" value="Macrophage Migration Inhibitory Factor"/>
    <property type="match status" value="1"/>
</dbReference>
<dbReference type="HAMAP" id="MF_00718">
    <property type="entry name" value="Tautomerase_PptA"/>
    <property type="match status" value="1"/>
</dbReference>
<dbReference type="InterPro" id="IPR004370">
    <property type="entry name" value="4-OT-like_dom"/>
</dbReference>
<dbReference type="InterPro" id="IPR014347">
    <property type="entry name" value="Tautomerase/MIF_sf"/>
</dbReference>
<dbReference type="InterPro" id="IPR017284">
    <property type="entry name" value="Tautomerase_PptA"/>
</dbReference>
<dbReference type="NCBIfam" id="NF002324">
    <property type="entry name" value="PRK01271.1"/>
    <property type="match status" value="1"/>
</dbReference>
<dbReference type="Pfam" id="PF01361">
    <property type="entry name" value="Tautomerase"/>
    <property type="match status" value="1"/>
</dbReference>
<dbReference type="PIRSF" id="PIRSF037799">
    <property type="entry name" value="Tautomer_YdcE_prd"/>
    <property type="match status" value="1"/>
</dbReference>
<dbReference type="SUPFAM" id="SSF55331">
    <property type="entry name" value="Tautomerase/MIF"/>
    <property type="match status" value="1"/>
</dbReference>
<sequence length="75" mass="8546">MPHIDIKCFPRELDEQQKAALAADITDVIIRHLNSKDSSISIALQQIQPESWQAIWDAEIEPQMEALIKKPGYSM</sequence>
<protein>
    <recommendedName>
        <fullName evidence="1">Tautomerase PptA</fullName>
        <ecNumber evidence="1">5.3.2.-</ecNumber>
    </recommendedName>
</protein>
<gene>
    <name evidence="1" type="primary">pptA</name>
    <name type="ordered locus">SSON_1664</name>
</gene>
<keyword id="KW-0963">Cytoplasm</keyword>
<keyword id="KW-0413">Isomerase</keyword>
<keyword id="KW-1185">Reference proteome</keyword>